<keyword id="KW-0687">Ribonucleoprotein</keyword>
<keyword id="KW-0689">Ribosomal protein</keyword>
<gene>
    <name evidence="1" type="primary">rpmI</name>
    <name type="ordered locus">SCH_1354</name>
</gene>
<sequence>MPKIKTVRGAAKRFKKTGKGGFKHKHANLRHILTKKATKRKRHLRPKAMVSKGDLGLVIACLPYA</sequence>
<organism>
    <name type="scientific">Salmonella choleraesuis (strain SC-B67)</name>
    <dbReference type="NCBI Taxonomy" id="321314"/>
    <lineage>
        <taxon>Bacteria</taxon>
        <taxon>Pseudomonadati</taxon>
        <taxon>Pseudomonadota</taxon>
        <taxon>Gammaproteobacteria</taxon>
        <taxon>Enterobacterales</taxon>
        <taxon>Enterobacteriaceae</taxon>
        <taxon>Salmonella</taxon>
    </lineage>
</organism>
<accession>Q57PV1</accession>
<evidence type="ECO:0000255" key="1">
    <source>
        <dbReference type="HAMAP-Rule" id="MF_00514"/>
    </source>
</evidence>
<evidence type="ECO:0000256" key="2">
    <source>
        <dbReference type="SAM" id="MobiDB-lite"/>
    </source>
</evidence>
<evidence type="ECO:0000305" key="3"/>
<reference key="1">
    <citation type="journal article" date="2005" name="Nucleic Acids Res.">
        <title>The genome sequence of Salmonella enterica serovar Choleraesuis, a highly invasive and resistant zoonotic pathogen.</title>
        <authorList>
            <person name="Chiu C.-H."/>
            <person name="Tang P."/>
            <person name="Chu C."/>
            <person name="Hu S."/>
            <person name="Bao Q."/>
            <person name="Yu J."/>
            <person name="Chou Y.-Y."/>
            <person name="Wang H.-S."/>
            <person name="Lee Y.-S."/>
        </authorList>
    </citation>
    <scope>NUCLEOTIDE SEQUENCE [LARGE SCALE GENOMIC DNA]</scope>
    <source>
        <strain>SC-B67</strain>
    </source>
</reference>
<protein>
    <recommendedName>
        <fullName evidence="1">Large ribosomal subunit protein bL35</fullName>
    </recommendedName>
    <alternativeName>
        <fullName evidence="3">50S ribosomal protein L35</fullName>
    </alternativeName>
</protein>
<dbReference type="EMBL" id="AE017220">
    <property type="protein sequence ID" value="AAX65260.1"/>
    <property type="status" value="ALT_INIT"/>
    <property type="molecule type" value="Genomic_DNA"/>
</dbReference>
<dbReference type="RefSeq" id="WP_001124225.1">
    <property type="nucleotide sequence ID" value="NC_006905.1"/>
</dbReference>
<dbReference type="SMR" id="Q57PV1"/>
<dbReference type="GeneID" id="97601348"/>
<dbReference type="KEGG" id="sec:SCH_1354"/>
<dbReference type="HOGENOM" id="CLU_169643_1_1_6"/>
<dbReference type="Proteomes" id="UP000000538">
    <property type="component" value="Chromosome"/>
</dbReference>
<dbReference type="GO" id="GO:0022625">
    <property type="term" value="C:cytosolic large ribosomal subunit"/>
    <property type="evidence" value="ECO:0007669"/>
    <property type="project" value="TreeGrafter"/>
</dbReference>
<dbReference type="GO" id="GO:0003735">
    <property type="term" value="F:structural constituent of ribosome"/>
    <property type="evidence" value="ECO:0007669"/>
    <property type="project" value="InterPro"/>
</dbReference>
<dbReference type="GO" id="GO:0006412">
    <property type="term" value="P:translation"/>
    <property type="evidence" value="ECO:0007669"/>
    <property type="project" value="UniProtKB-UniRule"/>
</dbReference>
<dbReference type="FunFam" id="4.10.410.60:FF:000001">
    <property type="entry name" value="50S ribosomal protein L35"/>
    <property type="match status" value="1"/>
</dbReference>
<dbReference type="Gene3D" id="4.10.410.60">
    <property type="match status" value="1"/>
</dbReference>
<dbReference type="HAMAP" id="MF_00514">
    <property type="entry name" value="Ribosomal_bL35"/>
    <property type="match status" value="1"/>
</dbReference>
<dbReference type="InterPro" id="IPR001706">
    <property type="entry name" value="Ribosomal_bL35"/>
</dbReference>
<dbReference type="InterPro" id="IPR021137">
    <property type="entry name" value="Ribosomal_bL35-like"/>
</dbReference>
<dbReference type="InterPro" id="IPR018265">
    <property type="entry name" value="Ribosomal_bL35_CS"/>
</dbReference>
<dbReference type="InterPro" id="IPR037229">
    <property type="entry name" value="Ribosomal_bL35_sf"/>
</dbReference>
<dbReference type="NCBIfam" id="TIGR00001">
    <property type="entry name" value="rpmI_bact"/>
    <property type="match status" value="1"/>
</dbReference>
<dbReference type="PANTHER" id="PTHR33343">
    <property type="entry name" value="54S RIBOSOMAL PROTEIN BL35M"/>
    <property type="match status" value="1"/>
</dbReference>
<dbReference type="PANTHER" id="PTHR33343:SF1">
    <property type="entry name" value="LARGE RIBOSOMAL SUBUNIT PROTEIN BL35M"/>
    <property type="match status" value="1"/>
</dbReference>
<dbReference type="Pfam" id="PF01632">
    <property type="entry name" value="Ribosomal_L35p"/>
    <property type="match status" value="1"/>
</dbReference>
<dbReference type="PRINTS" id="PR00064">
    <property type="entry name" value="RIBOSOMALL35"/>
</dbReference>
<dbReference type="SUPFAM" id="SSF143034">
    <property type="entry name" value="L35p-like"/>
    <property type="match status" value="1"/>
</dbReference>
<dbReference type="PROSITE" id="PS00936">
    <property type="entry name" value="RIBOSOMAL_L35"/>
    <property type="match status" value="1"/>
</dbReference>
<feature type="chain" id="PRO_0000258749" description="Large ribosomal subunit protein bL35">
    <location>
        <begin position="1"/>
        <end position="65"/>
    </location>
</feature>
<feature type="region of interest" description="Disordered" evidence="2">
    <location>
        <begin position="1"/>
        <end position="22"/>
    </location>
</feature>
<feature type="compositionally biased region" description="Basic residues" evidence="2">
    <location>
        <begin position="10"/>
        <end position="22"/>
    </location>
</feature>
<comment type="similarity">
    <text evidence="1">Belongs to the bacterial ribosomal protein bL35 family.</text>
</comment>
<comment type="sequence caution" evidence="3">
    <conflict type="erroneous initiation">
        <sequence resource="EMBL-CDS" id="AAX65260"/>
    </conflict>
</comment>
<proteinExistence type="inferred from homology"/>
<name>RL35_SALCH</name>